<gene>
    <name type="primary">ZDHHC9</name>
</gene>
<reference key="1">
    <citation type="journal article" date="2005" name="BMC Genomics">
        <title>Characterization of 954 bovine full-CDS cDNA sequences.</title>
        <authorList>
            <person name="Harhay G.P."/>
            <person name="Sonstegard T.S."/>
            <person name="Keele J.W."/>
            <person name="Heaton M.P."/>
            <person name="Clawson M.L."/>
            <person name="Snelling W.M."/>
            <person name="Wiedmann R.T."/>
            <person name="Van Tassell C.P."/>
            <person name="Smith T.P.L."/>
        </authorList>
    </citation>
    <scope>NUCLEOTIDE SEQUENCE [LARGE SCALE MRNA]</scope>
</reference>
<reference key="2">
    <citation type="submission" date="2005-09" db="EMBL/GenBank/DDBJ databases">
        <authorList>
            <consortium name="NIH - Mammalian Gene Collection (MGC) project"/>
        </authorList>
    </citation>
    <scope>NUCLEOTIDE SEQUENCE [LARGE SCALE MRNA]</scope>
    <source>
        <strain>Crossbred X Angus</strain>
        <tissue>Ileum</tissue>
    </source>
</reference>
<protein>
    <recommendedName>
        <fullName>Palmitoyltransferase ZDHHC9</fullName>
        <ecNumber evidence="2">2.3.1.225</ecNumber>
    </recommendedName>
    <alternativeName>
        <fullName>Zinc finger DHHC domain-containing protein 9</fullName>
        <shortName>DHHC-9</shortName>
    </alternativeName>
</protein>
<keyword id="KW-0012">Acyltransferase</keyword>
<keyword id="KW-0256">Endoplasmic reticulum</keyword>
<keyword id="KW-0333">Golgi apparatus</keyword>
<keyword id="KW-0449">Lipoprotein</keyword>
<keyword id="KW-0472">Membrane</keyword>
<keyword id="KW-0564">Palmitate</keyword>
<keyword id="KW-1185">Reference proteome</keyword>
<keyword id="KW-0808">Transferase</keyword>
<keyword id="KW-0812">Transmembrane</keyword>
<keyword id="KW-1133">Transmembrane helix</keyword>
<accession>Q58DA8</accession>
<accession>Q2KJI5</accession>
<proteinExistence type="evidence at transcript level"/>
<feature type="chain" id="PRO_0000212879" description="Palmitoyltransferase ZDHHC9">
    <location>
        <begin position="1"/>
        <end position="363"/>
    </location>
</feature>
<feature type="topological domain" description="Cytoplasmic" evidence="3">
    <location>
        <begin position="1"/>
        <end position="35"/>
    </location>
</feature>
<feature type="transmembrane region" description="Helical" evidence="3">
    <location>
        <begin position="36"/>
        <end position="56"/>
    </location>
</feature>
<feature type="topological domain" description="Lumenal" evidence="3">
    <location>
        <begin position="57"/>
        <end position="63"/>
    </location>
</feature>
<feature type="transmembrane region" description="Helical" evidence="3">
    <location>
        <begin position="64"/>
        <end position="84"/>
    </location>
</feature>
<feature type="topological domain" description="Cytoplasmic" evidence="3">
    <location>
        <begin position="85"/>
        <end position="183"/>
    </location>
</feature>
<feature type="transmembrane region" description="Helical" evidence="3">
    <location>
        <begin position="184"/>
        <end position="204"/>
    </location>
</feature>
<feature type="topological domain" description="Lumenal" evidence="3">
    <location>
        <begin position="205"/>
        <end position="228"/>
    </location>
</feature>
<feature type="transmembrane region" description="Helical" evidence="3">
    <location>
        <begin position="229"/>
        <end position="249"/>
    </location>
</feature>
<feature type="topological domain" description="Cytoplasmic" evidence="3">
    <location>
        <begin position="250"/>
        <end position="363"/>
    </location>
</feature>
<feature type="domain" description="DHHC" evidence="4">
    <location>
        <begin position="139"/>
        <end position="189"/>
    </location>
</feature>
<feature type="region of interest" description="Disordered" evidence="5">
    <location>
        <begin position="303"/>
        <end position="363"/>
    </location>
</feature>
<feature type="compositionally biased region" description="Polar residues" evidence="5">
    <location>
        <begin position="310"/>
        <end position="322"/>
    </location>
</feature>
<feature type="compositionally biased region" description="Pro residues" evidence="5">
    <location>
        <begin position="345"/>
        <end position="355"/>
    </location>
</feature>
<feature type="active site" description="S-palmitoyl cysteine intermediate" evidence="2">
    <location>
        <position position="169"/>
    </location>
</feature>
<feature type="sequence conflict" description="In Ref. 2; AAI05326." evidence="6" ref="2">
    <original>K</original>
    <variation>E</variation>
    <location>
        <position position="281"/>
    </location>
</feature>
<name>ZDHC9_BOVIN</name>
<sequence length="363" mass="40826">MSVMVVRKKVTRKWEKLPGRNTFCCDGRVMMARQKGIFYLTLFLILGTCTLFFAFECRYLAVQLSPAIPVFAAMLFLFSMATLLRTSFSDPGVIPRALPDEAAFIEMEIEATNGAVPQGQRPPPRIKNFQINNQIVKLKYCYTCKIFRPPRASHCSICDNCVERFDHHCPWVGNCVGKRNYRYFYLFILSLSLLTIYVFAFNIVYVALKSLKIGFLETLKETPGTVLEVLICFFTLWSVVGLTGFHTFLVALNQTTNEDIKGSWTGKNRVQNPYSHGNIVKNCCEVLCGPLPPSVLDRRGILPLEESGSRPPSTQEASTSLLPQGPAPIDHLSNEMPEDTSTPEEMPPPEPPEPPQEVTEAEK</sequence>
<evidence type="ECO:0000250" key="1">
    <source>
        <dbReference type="UniProtKB" id="Q8IUH5"/>
    </source>
</evidence>
<evidence type="ECO:0000250" key="2">
    <source>
        <dbReference type="UniProtKB" id="Q9Y397"/>
    </source>
</evidence>
<evidence type="ECO:0000255" key="3"/>
<evidence type="ECO:0000255" key="4">
    <source>
        <dbReference type="PROSITE-ProRule" id="PRU00067"/>
    </source>
</evidence>
<evidence type="ECO:0000256" key="5">
    <source>
        <dbReference type="SAM" id="MobiDB-lite"/>
    </source>
</evidence>
<evidence type="ECO:0000305" key="6"/>
<comment type="function">
    <text evidence="2">Palmitoyltransferase that catalyzes the addition of palmitate onto various protein substrates, such as ADRB2, GSDMD, HRAS, NRAS and CGAS. The ZDHHC9-GOLGA7 complex is a palmitoyltransferase specific for HRAS and NRAS. May have a palmitoyltransferase activity toward the beta-2 adrenergic receptor/ADRB2 and therefore regulate G protein-coupled receptor signaling. Acts as a regulator of innate immunity by catalyzing palmitoylation of CGAS, thereby promoting CGAS homodimerization and cyclic GMP-AMP synthase activity. Activates pyroptosis by catalyzing palmitoylation of gasdermin-D (GSDMD), thereby promoting membrane translocation and pore formation of GSDMD.</text>
</comment>
<comment type="catalytic activity">
    <reaction evidence="2">
        <text>L-cysteinyl-[protein] + hexadecanoyl-CoA = S-hexadecanoyl-L-cysteinyl-[protein] + CoA</text>
        <dbReference type="Rhea" id="RHEA:36683"/>
        <dbReference type="Rhea" id="RHEA-COMP:10131"/>
        <dbReference type="Rhea" id="RHEA-COMP:11032"/>
        <dbReference type="ChEBI" id="CHEBI:29950"/>
        <dbReference type="ChEBI" id="CHEBI:57287"/>
        <dbReference type="ChEBI" id="CHEBI:57379"/>
        <dbReference type="ChEBI" id="CHEBI:74151"/>
        <dbReference type="EC" id="2.3.1.225"/>
    </reaction>
    <physiologicalReaction direction="left-to-right" evidence="2">
        <dbReference type="Rhea" id="RHEA:36684"/>
    </physiologicalReaction>
</comment>
<comment type="subunit">
    <text evidence="2">Interacts with GOLGA7.</text>
</comment>
<comment type="subcellular location">
    <subcellularLocation>
        <location evidence="2">Endoplasmic reticulum membrane</location>
        <topology evidence="3">Multi-pass membrane protein</topology>
    </subcellularLocation>
    <subcellularLocation>
        <location evidence="2">Golgi apparatus membrane</location>
        <topology evidence="3">Multi-pass membrane protein</topology>
    </subcellularLocation>
</comment>
<comment type="domain">
    <text evidence="1">The DHHC domain is required for palmitoyltransferase activity.</text>
</comment>
<comment type="similarity">
    <text evidence="6">Belongs to the DHHC palmitoyltransferase family. ERF2/ZDHHC9 subfamily.</text>
</comment>
<dbReference type="EC" id="2.3.1.225" evidence="2"/>
<dbReference type="EMBL" id="BT021689">
    <property type="protein sequence ID" value="AAX46536.1"/>
    <property type="molecule type" value="mRNA"/>
</dbReference>
<dbReference type="EMBL" id="BC105325">
    <property type="protein sequence ID" value="AAI05326.1"/>
    <property type="molecule type" value="mRNA"/>
</dbReference>
<dbReference type="RefSeq" id="NP_001029733.2">
    <property type="nucleotide sequence ID" value="NM_001034561.2"/>
</dbReference>
<dbReference type="RefSeq" id="XP_005227547.1">
    <property type="nucleotide sequence ID" value="XM_005227490.2"/>
</dbReference>
<dbReference type="RefSeq" id="XP_005227548.1">
    <property type="nucleotide sequence ID" value="XM_005227491.2"/>
</dbReference>
<dbReference type="SMR" id="Q58DA8"/>
<dbReference type="FunCoup" id="Q58DA8">
    <property type="interactions" value="878"/>
</dbReference>
<dbReference type="STRING" id="9913.ENSBTAP00000020418"/>
<dbReference type="PaxDb" id="9913-ENSBTAP00000020418"/>
<dbReference type="GeneID" id="527885"/>
<dbReference type="KEGG" id="bta:527885"/>
<dbReference type="CTD" id="51114"/>
<dbReference type="VEuPathDB" id="HostDB:ENSBTAG00000015354"/>
<dbReference type="eggNOG" id="KOG1311">
    <property type="taxonomic scope" value="Eukaryota"/>
</dbReference>
<dbReference type="HOGENOM" id="CLU_018741_3_1_1"/>
<dbReference type="InParanoid" id="Q58DA8"/>
<dbReference type="OMA" id="YVTMFLI"/>
<dbReference type="OrthoDB" id="4096362at2759"/>
<dbReference type="TreeFam" id="TF312923"/>
<dbReference type="Reactome" id="R-BTA-9648002">
    <property type="pathway name" value="RAS processing"/>
</dbReference>
<dbReference type="Proteomes" id="UP000009136">
    <property type="component" value="Chromosome X"/>
</dbReference>
<dbReference type="Bgee" id="ENSBTAG00000015354">
    <property type="expression patterns" value="Expressed in floor plate of diencephalon and 101 other cell types or tissues"/>
</dbReference>
<dbReference type="GO" id="GO:0005783">
    <property type="term" value="C:endoplasmic reticulum"/>
    <property type="evidence" value="ECO:0000250"/>
    <property type="project" value="CAFA"/>
</dbReference>
<dbReference type="GO" id="GO:0005789">
    <property type="term" value="C:endoplasmic reticulum membrane"/>
    <property type="evidence" value="ECO:0007669"/>
    <property type="project" value="UniProtKB-SubCell"/>
</dbReference>
<dbReference type="GO" id="GO:0005794">
    <property type="term" value="C:Golgi apparatus"/>
    <property type="evidence" value="ECO:0000250"/>
    <property type="project" value="UniProtKB"/>
</dbReference>
<dbReference type="GO" id="GO:0000139">
    <property type="term" value="C:Golgi membrane"/>
    <property type="evidence" value="ECO:0000250"/>
    <property type="project" value="CAFA"/>
</dbReference>
<dbReference type="GO" id="GO:0002178">
    <property type="term" value="C:palmitoyltransferase complex"/>
    <property type="evidence" value="ECO:0000250"/>
    <property type="project" value="CAFA"/>
</dbReference>
<dbReference type="GO" id="GO:0019706">
    <property type="term" value="F:protein-cysteine S-palmitoyltransferase activity"/>
    <property type="evidence" value="ECO:0000250"/>
    <property type="project" value="UniProtKB"/>
</dbReference>
<dbReference type="GO" id="GO:0043849">
    <property type="term" value="F:Ras palmitoyltransferase activity"/>
    <property type="evidence" value="ECO:0000250"/>
    <property type="project" value="CAFA"/>
</dbReference>
<dbReference type="GO" id="GO:0018230">
    <property type="term" value="P:peptidyl-L-cysteine S-palmitoylation"/>
    <property type="evidence" value="ECO:0000250"/>
    <property type="project" value="CAFA"/>
</dbReference>
<dbReference type="GO" id="GO:0140639">
    <property type="term" value="P:positive regulation of pyroptotic inflammatory response"/>
    <property type="evidence" value="ECO:0000250"/>
    <property type="project" value="UniProtKB"/>
</dbReference>
<dbReference type="GO" id="GO:0006612">
    <property type="term" value="P:protein targeting to membrane"/>
    <property type="evidence" value="ECO:0000318"/>
    <property type="project" value="GO_Central"/>
</dbReference>
<dbReference type="InterPro" id="IPR001594">
    <property type="entry name" value="Palmitoyltrfase_DHHC"/>
</dbReference>
<dbReference type="InterPro" id="IPR039859">
    <property type="entry name" value="PFA4/ZDH16/20/ERF2-like"/>
</dbReference>
<dbReference type="PANTHER" id="PTHR22883:SF71">
    <property type="entry name" value="PALMITOYLTRANSFERASE ZDHHC9"/>
    <property type="match status" value="1"/>
</dbReference>
<dbReference type="PANTHER" id="PTHR22883">
    <property type="entry name" value="ZINC FINGER DHHC DOMAIN CONTAINING PROTEIN"/>
    <property type="match status" value="1"/>
</dbReference>
<dbReference type="Pfam" id="PF01529">
    <property type="entry name" value="DHHC"/>
    <property type="match status" value="1"/>
</dbReference>
<dbReference type="PROSITE" id="PS50216">
    <property type="entry name" value="DHHC"/>
    <property type="match status" value="1"/>
</dbReference>
<organism>
    <name type="scientific">Bos taurus</name>
    <name type="common">Bovine</name>
    <dbReference type="NCBI Taxonomy" id="9913"/>
    <lineage>
        <taxon>Eukaryota</taxon>
        <taxon>Metazoa</taxon>
        <taxon>Chordata</taxon>
        <taxon>Craniata</taxon>
        <taxon>Vertebrata</taxon>
        <taxon>Euteleostomi</taxon>
        <taxon>Mammalia</taxon>
        <taxon>Eutheria</taxon>
        <taxon>Laurasiatheria</taxon>
        <taxon>Artiodactyla</taxon>
        <taxon>Ruminantia</taxon>
        <taxon>Pecora</taxon>
        <taxon>Bovidae</taxon>
        <taxon>Bovinae</taxon>
        <taxon>Bos</taxon>
    </lineage>
</organism>